<name>RECF_PARMW</name>
<gene>
    <name evidence="1" type="primary">recF</name>
    <name type="ordered locus">SYNW2049</name>
</gene>
<proteinExistence type="inferred from homology"/>
<keyword id="KW-0067">ATP-binding</keyword>
<keyword id="KW-0963">Cytoplasm</keyword>
<keyword id="KW-0227">DNA damage</keyword>
<keyword id="KW-0234">DNA repair</keyword>
<keyword id="KW-0235">DNA replication</keyword>
<keyword id="KW-0238">DNA-binding</keyword>
<keyword id="KW-0547">Nucleotide-binding</keyword>
<keyword id="KW-0742">SOS response</keyword>
<sequence length="365" mass="41473">MQGFRNHRKLSLELTQPRLLVIGPNGIGKSNLLEAVELLGSLRSHRCSQDRDLIQWEAPRALLRAGLDDGDQLELELRRQGGRQARRNGKTLDRQLDLIGPLRCIGFSALDLELVRGEPALRRQWLDRVVLQLEPVYADLLGRYNRLLRQRSQLWRRGAQTNPNQRDALLDAFDVQMALVSTRIHRRRQRALRRLEPIARRWQSHLSAGSEELELHYQPGSRLDAEEAEEPWRLAIEEQLRLQRPEEERLGSCRVGPHRDEVSLQLGGTPARRFGSSGQQRSLVLGLKLAELELVTQLFGEAPLLLLDDVLAELDPTRQHLLLEAVGQEHQCLVSATHLSGFEGGWREHSQILKPGDLSPGVEIG</sequence>
<dbReference type="EMBL" id="BX569694">
    <property type="protein sequence ID" value="CAE08564.1"/>
    <property type="molecule type" value="Genomic_DNA"/>
</dbReference>
<dbReference type="SMR" id="Q7U4L8"/>
<dbReference type="STRING" id="84588.SYNW2049"/>
<dbReference type="KEGG" id="syw:SYNW2049"/>
<dbReference type="eggNOG" id="COG1195">
    <property type="taxonomic scope" value="Bacteria"/>
</dbReference>
<dbReference type="HOGENOM" id="CLU_040267_0_1_3"/>
<dbReference type="Proteomes" id="UP000001422">
    <property type="component" value="Chromosome"/>
</dbReference>
<dbReference type="GO" id="GO:0005737">
    <property type="term" value="C:cytoplasm"/>
    <property type="evidence" value="ECO:0007669"/>
    <property type="project" value="UniProtKB-SubCell"/>
</dbReference>
<dbReference type="GO" id="GO:0005524">
    <property type="term" value="F:ATP binding"/>
    <property type="evidence" value="ECO:0007669"/>
    <property type="project" value="UniProtKB-UniRule"/>
</dbReference>
<dbReference type="GO" id="GO:0003697">
    <property type="term" value="F:single-stranded DNA binding"/>
    <property type="evidence" value="ECO:0007669"/>
    <property type="project" value="UniProtKB-UniRule"/>
</dbReference>
<dbReference type="GO" id="GO:0006260">
    <property type="term" value="P:DNA replication"/>
    <property type="evidence" value="ECO:0007669"/>
    <property type="project" value="UniProtKB-UniRule"/>
</dbReference>
<dbReference type="GO" id="GO:0000731">
    <property type="term" value="P:DNA synthesis involved in DNA repair"/>
    <property type="evidence" value="ECO:0007669"/>
    <property type="project" value="TreeGrafter"/>
</dbReference>
<dbReference type="GO" id="GO:0006302">
    <property type="term" value="P:double-strand break repair"/>
    <property type="evidence" value="ECO:0007669"/>
    <property type="project" value="TreeGrafter"/>
</dbReference>
<dbReference type="GO" id="GO:0009432">
    <property type="term" value="P:SOS response"/>
    <property type="evidence" value="ECO:0007669"/>
    <property type="project" value="UniProtKB-UniRule"/>
</dbReference>
<dbReference type="Gene3D" id="3.40.50.300">
    <property type="entry name" value="P-loop containing nucleotide triphosphate hydrolases"/>
    <property type="match status" value="1"/>
</dbReference>
<dbReference type="Gene3D" id="1.20.1050.90">
    <property type="entry name" value="RecF/RecN/SMC, N-terminal domain"/>
    <property type="match status" value="1"/>
</dbReference>
<dbReference type="HAMAP" id="MF_00365">
    <property type="entry name" value="RecF"/>
    <property type="match status" value="1"/>
</dbReference>
<dbReference type="InterPro" id="IPR001238">
    <property type="entry name" value="DNA-binding_RecF"/>
</dbReference>
<dbReference type="InterPro" id="IPR018078">
    <property type="entry name" value="DNA-binding_RecF_CS"/>
</dbReference>
<dbReference type="InterPro" id="IPR027417">
    <property type="entry name" value="P-loop_NTPase"/>
</dbReference>
<dbReference type="InterPro" id="IPR003395">
    <property type="entry name" value="RecF/RecN/SMC_N"/>
</dbReference>
<dbReference type="InterPro" id="IPR042174">
    <property type="entry name" value="RecF_2"/>
</dbReference>
<dbReference type="NCBIfam" id="TIGR00611">
    <property type="entry name" value="recf"/>
    <property type="match status" value="1"/>
</dbReference>
<dbReference type="PANTHER" id="PTHR32182">
    <property type="entry name" value="DNA REPLICATION AND REPAIR PROTEIN RECF"/>
    <property type="match status" value="1"/>
</dbReference>
<dbReference type="PANTHER" id="PTHR32182:SF0">
    <property type="entry name" value="DNA REPLICATION AND REPAIR PROTEIN RECF"/>
    <property type="match status" value="1"/>
</dbReference>
<dbReference type="Pfam" id="PF02463">
    <property type="entry name" value="SMC_N"/>
    <property type="match status" value="1"/>
</dbReference>
<dbReference type="SUPFAM" id="SSF52540">
    <property type="entry name" value="P-loop containing nucleoside triphosphate hydrolases"/>
    <property type="match status" value="1"/>
</dbReference>
<dbReference type="PROSITE" id="PS00617">
    <property type="entry name" value="RECF_1"/>
    <property type="match status" value="1"/>
</dbReference>
<dbReference type="PROSITE" id="PS00618">
    <property type="entry name" value="RECF_2"/>
    <property type="match status" value="1"/>
</dbReference>
<evidence type="ECO:0000255" key="1">
    <source>
        <dbReference type="HAMAP-Rule" id="MF_00365"/>
    </source>
</evidence>
<reference key="1">
    <citation type="journal article" date="2003" name="Nature">
        <title>The genome of a motile marine Synechococcus.</title>
        <authorList>
            <person name="Palenik B."/>
            <person name="Brahamsha B."/>
            <person name="Larimer F.W."/>
            <person name="Land M.L."/>
            <person name="Hauser L."/>
            <person name="Chain P."/>
            <person name="Lamerdin J.E."/>
            <person name="Regala W."/>
            <person name="Allen E.E."/>
            <person name="McCarren J."/>
            <person name="Paulsen I.T."/>
            <person name="Dufresne A."/>
            <person name="Partensky F."/>
            <person name="Webb E.A."/>
            <person name="Waterbury J."/>
        </authorList>
    </citation>
    <scope>NUCLEOTIDE SEQUENCE [LARGE SCALE GENOMIC DNA]</scope>
    <source>
        <strain>WH8102</strain>
    </source>
</reference>
<organism>
    <name type="scientific">Parasynechococcus marenigrum (strain WH8102)</name>
    <dbReference type="NCBI Taxonomy" id="84588"/>
    <lineage>
        <taxon>Bacteria</taxon>
        <taxon>Bacillati</taxon>
        <taxon>Cyanobacteriota</taxon>
        <taxon>Cyanophyceae</taxon>
        <taxon>Synechococcales</taxon>
        <taxon>Prochlorococcaceae</taxon>
        <taxon>Parasynechococcus</taxon>
        <taxon>Parasynechococcus marenigrum</taxon>
    </lineage>
</organism>
<accession>Q7U4L8</accession>
<comment type="function">
    <text evidence="1">The RecF protein is involved in DNA metabolism; it is required for DNA replication and normal SOS inducibility. RecF binds preferentially to single-stranded, linear DNA. It also seems to bind ATP.</text>
</comment>
<comment type="subcellular location">
    <subcellularLocation>
        <location evidence="1">Cytoplasm</location>
    </subcellularLocation>
</comment>
<comment type="similarity">
    <text evidence="1">Belongs to the RecF family.</text>
</comment>
<protein>
    <recommendedName>
        <fullName evidence="1">DNA replication and repair protein RecF</fullName>
    </recommendedName>
</protein>
<feature type="chain" id="PRO_0000196479" description="DNA replication and repair protein RecF">
    <location>
        <begin position="1"/>
        <end position="365"/>
    </location>
</feature>
<feature type="binding site" evidence="1">
    <location>
        <begin position="23"/>
        <end position="30"/>
    </location>
    <ligand>
        <name>ATP</name>
        <dbReference type="ChEBI" id="CHEBI:30616"/>
    </ligand>
</feature>